<evidence type="ECO:0000250" key="1">
    <source>
        <dbReference type="UniProtKB" id="Q96EI5"/>
    </source>
</evidence>
<evidence type="ECO:0000256" key="2">
    <source>
        <dbReference type="SAM" id="MobiDB-lite"/>
    </source>
</evidence>
<evidence type="ECO:0000305" key="3"/>
<protein>
    <recommendedName>
        <fullName>Transcription elongation factor A protein-like 4</fullName>
        <shortName>TCEA-like protein 4</shortName>
    </recommendedName>
    <alternativeName>
        <fullName>Transcription elongation factor S-II protein-like 4</fullName>
    </alternativeName>
</protein>
<gene>
    <name type="primary">TCEAL4</name>
</gene>
<reference key="1">
    <citation type="submission" date="2004-11" db="EMBL/GenBank/DDBJ databases">
        <authorList>
            <consortium name="The German cDNA consortium"/>
        </authorList>
    </citation>
    <scope>NUCLEOTIDE SEQUENCE [LARGE SCALE MRNA]</scope>
    <source>
        <tissue>Brain cortex</tissue>
    </source>
</reference>
<sequence>MEKLYNENEGMASNQGKMENEEQPQDERKPEVACTLEDKKLENEGKTENKGKTGDEEMLKDKGKPESEGKAKEGKSEREGESEMEGGSEREGKPESEGEPGSETRAAGKRPAEDDVPRKAKRKTNKGLAHYLKEYKEAIHDMNFSNEDMIREFDNMAKVQDEKRKSKQKLGAFLWMQRNLQDPFYPRGPREFRGGCRAPRRDIEDIPYV</sequence>
<name>TCAL4_PONAB</name>
<keyword id="KW-0007">Acetylation</keyword>
<keyword id="KW-0539">Nucleus</keyword>
<keyword id="KW-0597">Phosphoprotein</keyword>
<keyword id="KW-1185">Reference proteome</keyword>
<keyword id="KW-0804">Transcription</keyword>
<keyword id="KW-0805">Transcription regulation</keyword>
<organism>
    <name type="scientific">Pongo abelii</name>
    <name type="common">Sumatran orangutan</name>
    <name type="synonym">Pongo pygmaeus abelii</name>
    <dbReference type="NCBI Taxonomy" id="9601"/>
    <lineage>
        <taxon>Eukaryota</taxon>
        <taxon>Metazoa</taxon>
        <taxon>Chordata</taxon>
        <taxon>Craniata</taxon>
        <taxon>Vertebrata</taxon>
        <taxon>Euteleostomi</taxon>
        <taxon>Mammalia</taxon>
        <taxon>Eutheria</taxon>
        <taxon>Euarchontoglires</taxon>
        <taxon>Primates</taxon>
        <taxon>Haplorrhini</taxon>
        <taxon>Catarrhini</taxon>
        <taxon>Hominidae</taxon>
        <taxon>Pongo</taxon>
    </lineage>
</organism>
<accession>Q5R6B4</accession>
<proteinExistence type="evidence at transcript level"/>
<feature type="chain" id="PRO_0000239210" description="Transcription elongation factor A protein-like 4">
    <location>
        <begin position="1"/>
        <end position="209"/>
    </location>
</feature>
<feature type="region of interest" description="Disordered" evidence="2">
    <location>
        <begin position="1"/>
        <end position="125"/>
    </location>
</feature>
<feature type="compositionally biased region" description="Basic and acidic residues" evidence="2">
    <location>
        <begin position="25"/>
        <end position="96"/>
    </location>
</feature>
<feature type="modified residue" description="N-acetylmethionine" evidence="1">
    <location>
        <position position="1"/>
    </location>
</feature>
<feature type="modified residue" description="Phosphoserine" evidence="1">
    <location>
        <position position="88"/>
    </location>
</feature>
<feature type="modified residue" description="Phosphoserine" evidence="1">
    <location>
        <position position="96"/>
    </location>
</feature>
<dbReference type="EMBL" id="CR860577">
    <property type="protein sequence ID" value="CAH92702.1"/>
    <property type="molecule type" value="mRNA"/>
</dbReference>
<dbReference type="RefSeq" id="NP_001126582.1">
    <property type="nucleotide sequence ID" value="NM_001133110.1"/>
</dbReference>
<dbReference type="RefSeq" id="XP_009233354.3">
    <property type="nucleotide sequence ID" value="XM_009235079.4"/>
</dbReference>
<dbReference type="RefSeq" id="XP_009233355.1">
    <property type="nucleotide sequence ID" value="XM_009235080.1"/>
</dbReference>
<dbReference type="RefSeq" id="XP_009233356.1">
    <property type="nucleotide sequence ID" value="XM_009235081.1"/>
</dbReference>
<dbReference type="RefSeq" id="XP_024096108.2">
    <property type="nucleotide sequence ID" value="XM_024240340.3"/>
</dbReference>
<dbReference type="RefSeq" id="XP_063577076.1">
    <property type="nucleotide sequence ID" value="XM_063721006.1"/>
</dbReference>
<dbReference type="FunCoup" id="Q5R6B4">
    <property type="interactions" value="75"/>
</dbReference>
<dbReference type="STRING" id="9601.ENSPPYP00000023040"/>
<dbReference type="GeneID" id="100173574"/>
<dbReference type="KEGG" id="pon:100173574"/>
<dbReference type="CTD" id="79921"/>
<dbReference type="eggNOG" id="ENOG502SXKH">
    <property type="taxonomic scope" value="Eukaryota"/>
</dbReference>
<dbReference type="HOGENOM" id="CLU_078412_1_0_1"/>
<dbReference type="InParanoid" id="Q5R6B4"/>
<dbReference type="OrthoDB" id="9834312at2759"/>
<dbReference type="TreeFam" id="TF336871"/>
<dbReference type="Proteomes" id="UP000001595">
    <property type="component" value="Chromosome X"/>
</dbReference>
<dbReference type="GO" id="GO:0005634">
    <property type="term" value="C:nucleus"/>
    <property type="evidence" value="ECO:0007669"/>
    <property type="project" value="UniProtKB-SubCell"/>
</dbReference>
<dbReference type="InterPro" id="IPR021156">
    <property type="entry name" value="TF_A-like/BEX"/>
</dbReference>
<dbReference type="Pfam" id="PF04538">
    <property type="entry name" value="BEX"/>
    <property type="match status" value="1"/>
</dbReference>
<comment type="function">
    <text>May be involved in transcriptional regulation.</text>
</comment>
<comment type="subcellular location">
    <subcellularLocation>
        <location evidence="3">Nucleus</location>
    </subcellularLocation>
</comment>
<comment type="similarity">
    <text evidence="3">Belongs to the TFS-II family. TFA subfamily.</text>
</comment>